<keyword id="KW-0249">Electron transport</keyword>
<keyword id="KW-0349">Heme</keyword>
<keyword id="KW-0408">Iron</keyword>
<keyword id="KW-0472">Membrane</keyword>
<keyword id="KW-0479">Metal-binding</keyword>
<keyword id="KW-0496">Mitochondrion</keyword>
<keyword id="KW-0999">Mitochondrion inner membrane</keyword>
<keyword id="KW-0679">Respiratory chain</keyword>
<keyword id="KW-0812">Transmembrane</keyword>
<keyword id="KW-1133">Transmembrane helix</keyword>
<keyword id="KW-0813">Transport</keyword>
<keyword id="KW-0830">Ubiquinone</keyword>
<evidence type="ECO:0000250" key="1"/>
<evidence type="ECO:0000250" key="2">
    <source>
        <dbReference type="UniProtKB" id="P00157"/>
    </source>
</evidence>
<evidence type="ECO:0000255" key="3">
    <source>
        <dbReference type="PROSITE-ProRule" id="PRU00967"/>
    </source>
</evidence>
<evidence type="ECO:0000255" key="4">
    <source>
        <dbReference type="PROSITE-ProRule" id="PRU00968"/>
    </source>
</evidence>
<gene>
    <name type="primary">MT-CYB</name>
    <name type="synonym">COB</name>
    <name type="synonym">CYTB</name>
    <name type="synonym">MTCYB</name>
</gene>
<dbReference type="EMBL" id="AB175121">
    <property type="protein sequence ID" value="BAE92686.1"/>
    <property type="molecule type" value="Genomic_DNA"/>
</dbReference>
<dbReference type="EMBL" id="AB175122">
    <property type="protein sequence ID" value="BAE92687.1"/>
    <property type="molecule type" value="Genomic_DNA"/>
</dbReference>
<dbReference type="SMR" id="Q1XIK9"/>
<dbReference type="GO" id="GO:0005743">
    <property type="term" value="C:mitochondrial inner membrane"/>
    <property type="evidence" value="ECO:0007669"/>
    <property type="project" value="UniProtKB-SubCell"/>
</dbReference>
<dbReference type="GO" id="GO:0045275">
    <property type="term" value="C:respiratory chain complex III"/>
    <property type="evidence" value="ECO:0007669"/>
    <property type="project" value="InterPro"/>
</dbReference>
<dbReference type="GO" id="GO:0046872">
    <property type="term" value="F:metal ion binding"/>
    <property type="evidence" value="ECO:0007669"/>
    <property type="project" value="UniProtKB-KW"/>
</dbReference>
<dbReference type="GO" id="GO:0008121">
    <property type="term" value="F:ubiquinol-cytochrome-c reductase activity"/>
    <property type="evidence" value="ECO:0007669"/>
    <property type="project" value="InterPro"/>
</dbReference>
<dbReference type="GO" id="GO:0006122">
    <property type="term" value="P:mitochondrial electron transport, ubiquinol to cytochrome c"/>
    <property type="evidence" value="ECO:0007669"/>
    <property type="project" value="TreeGrafter"/>
</dbReference>
<dbReference type="CDD" id="cd00290">
    <property type="entry name" value="cytochrome_b_C"/>
    <property type="match status" value="1"/>
</dbReference>
<dbReference type="CDD" id="cd00284">
    <property type="entry name" value="Cytochrome_b_N"/>
    <property type="match status" value="1"/>
</dbReference>
<dbReference type="FunFam" id="1.20.810.10:FF:000002">
    <property type="entry name" value="Cytochrome b"/>
    <property type="match status" value="1"/>
</dbReference>
<dbReference type="Gene3D" id="1.20.810.10">
    <property type="entry name" value="Cytochrome Bc1 Complex, Chain C"/>
    <property type="match status" value="1"/>
</dbReference>
<dbReference type="InterPro" id="IPR005798">
    <property type="entry name" value="Cyt_b/b6_C"/>
</dbReference>
<dbReference type="InterPro" id="IPR036150">
    <property type="entry name" value="Cyt_b/b6_C_sf"/>
</dbReference>
<dbReference type="InterPro" id="IPR005797">
    <property type="entry name" value="Cyt_b/b6_N"/>
</dbReference>
<dbReference type="InterPro" id="IPR027387">
    <property type="entry name" value="Cytb/b6-like_sf"/>
</dbReference>
<dbReference type="InterPro" id="IPR030689">
    <property type="entry name" value="Cytochrome_b"/>
</dbReference>
<dbReference type="InterPro" id="IPR048260">
    <property type="entry name" value="Cytochrome_b_C_euk/bac"/>
</dbReference>
<dbReference type="InterPro" id="IPR048259">
    <property type="entry name" value="Cytochrome_b_N_euk/bac"/>
</dbReference>
<dbReference type="InterPro" id="IPR016174">
    <property type="entry name" value="Di-haem_cyt_TM"/>
</dbReference>
<dbReference type="PANTHER" id="PTHR19271">
    <property type="entry name" value="CYTOCHROME B"/>
    <property type="match status" value="1"/>
</dbReference>
<dbReference type="PANTHER" id="PTHR19271:SF16">
    <property type="entry name" value="CYTOCHROME B"/>
    <property type="match status" value="1"/>
</dbReference>
<dbReference type="Pfam" id="PF00032">
    <property type="entry name" value="Cytochrom_B_C"/>
    <property type="match status" value="1"/>
</dbReference>
<dbReference type="Pfam" id="PF00033">
    <property type="entry name" value="Cytochrome_B"/>
    <property type="match status" value="1"/>
</dbReference>
<dbReference type="PIRSF" id="PIRSF038885">
    <property type="entry name" value="COB"/>
    <property type="match status" value="1"/>
</dbReference>
<dbReference type="SUPFAM" id="SSF81648">
    <property type="entry name" value="a domain/subunit of cytochrome bc1 complex (Ubiquinol-cytochrome c reductase)"/>
    <property type="match status" value="1"/>
</dbReference>
<dbReference type="SUPFAM" id="SSF81342">
    <property type="entry name" value="Transmembrane di-heme cytochromes"/>
    <property type="match status" value="1"/>
</dbReference>
<dbReference type="PROSITE" id="PS51003">
    <property type="entry name" value="CYTB_CTER"/>
    <property type="match status" value="1"/>
</dbReference>
<dbReference type="PROSITE" id="PS51002">
    <property type="entry name" value="CYTB_NTER"/>
    <property type="match status" value="1"/>
</dbReference>
<feature type="chain" id="PRO_0000254758" description="Cytochrome b">
    <location>
        <begin position="1"/>
        <end position="379"/>
    </location>
</feature>
<feature type="transmembrane region" description="Helical" evidence="2">
    <location>
        <begin position="33"/>
        <end position="53"/>
    </location>
</feature>
<feature type="transmembrane region" description="Helical" evidence="2">
    <location>
        <begin position="77"/>
        <end position="98"/>
    </location>
</feature>
<feature type="transmembrane region" description="Helical" evidence="2">
    <location>
        <begin position="113"/>
        <end position="133"/>
    </location>
</feature>
<feature type="transmembrane region" description="Helical" evidence="2">
    <location>
        <begin position="178"/>
        <end position="198"/>
    </location>
</feature>
<feature type="transmembrane region" description="Helical" evidence="2">
    <location>
        <begin position="226"/>
        <end position="246"/>
    </location>
</feature>
<feature type="transmembrane region" description="Helical" evidence="2">
    <location>
        <begin position="288"/>
        <end position="308"/>
    </location>
</feature>
<feature type="transmembrane region" description="Helical" evidence="2">
    <location>
        <begin position="320"/>
        <end position="340"/>
    </location>
</feature>
<feature type="transmembrane region" description="Helical" evidence="2">
    <location>
        <begin position="347"/>
        <end position="367"/>
    </location>
</feature>
<feature type="binding site" description="axial binding residue" evidence="2">
    <location>
        <position position="83"/>
    </location>
    <ligand>
        <name>heme b</name>
        <dbReference type="ChEBI" id="CHEBI:60344"/>
        <label>b562</label>
    </ligand>
    <ligandPart>
        <name>Fe</name>
        <dbReference type="ChEBI" id="CHEBI:18248"/>
    </ligandPart>
</feature>
<feature type="binding site" description="axial binding residue" evidence="2">
    <location>
        <position position="97"/>
    </location>
    <ligand>
        <name>heme b</name>
        <dbReference type="ChEBI" id="CHEBI:60344"/>
        <label>b566</label>
    </ligand>
    <ligandPart>
        <name>Fe</name>
        <dbReference type="ChEBI" id="CHEBI:18248"/>
    </ligandPart>
</feature>
<feature type="binding site" description="axial binding residue" evidence="2">
    <location>
        <position position="182"/>
    </location>
    <ligand>
        <name>heme b</name>
        <dbReference type="ChEBI" id="CHEBI:60344"/>
        <label>b562</label>
    </ligand>
    <ligandPart>
        <name>Fe</name>
        <dbReference type="ChEBI" id="CHEBI:18248"/>
    </ligandPart>
</feature>
<feature type="binding site" description="axial binding residue" evidence="2">
    <location>
        <position position="196"/>
    </location>
    <ligand>
        <name>heme b</name>
        <dbReference type="ChEBI" id="CHEBI:60344"/>
        <label>b566</label>
    </ligand>
    <ligandPart>
        <name>Fe</name>
        <dbReference type="ChEBI" id="CHEBI:18248"/>
    </ligandPart>
</feature>
<feature type="binding site" evidence="2">
    <location>
        <position position="201"/>
    </location>
    <ligand>
        <name>a ubiquinone</name>
        <dbReference type="ChEBI" id="CHEBI:16389"/>
    </ligand>
</feature>
<accession>Q1XIK9</accession>
<proteinExistence type="inferred from homology"/>
<reference key="1">
    <citation type="submission" date="2004-03" db="EMBL/GenBank/DDBJ databases">
        <title>Molecular phylogenetics of the Soricidae (Insectivora, Mammalia) based on mitochondrial cytochrome b gene sequences.</title>
        <authorList>
            <person name="Ohdachi S.D."/>
            <person name="Iwasa M.A."/>
            <person name="Abe H."/>
            <person name="Vogel P."/>
            <person name="Oshida T."/>
            <person name="Lin L.K."/>
            <person name="Hasegawa M."/>
        </authorList>
    </citation>
    <scope>NUCLEOTIDE SEQUENCE [GENOMIC DNA]</scope>
    <source>
        <tissue>Foot</tissue>
    </source>
</reference>
<name>CYB_SORCY</name>
<organism>
    <name type="scientific">Sorex cylindricauda</name>
    <name type="common">Greater stripe-backed shrew</name>
    <dbReference type="NCBI Taxonomy" id="268767"/>
    <lineage>
        <taxon>Eukaryota</taxon>
        <taxon>Metazoa</taxon>
        <taxon>Chordata</taxon>
        <taxon>Craniata</taxon>
        <taxon>Vertebrata</taxon>
        <taxon>Euteleostomi</taxon>
        <taxon>Mammalia</taxon>
        <taxon>Eutheria</taxon>
        <taxon>Laurasiatheria</taxon>
        <taxon>Eulipotyphla</taxon>
        <taxon>Soricidae</taxon>
        <taxon>Soricinae</taxon>
        <taxon>Sorex</taxon>
    </lineage>
</organism>
<protein>
    <recommendedName>
        <fullName>Cytochrome b</fullName>
    </recommendedName>
    <alternativeName>
        <fullName>Complex III subunit 3</fullName>
    </alternativeName>
    <alternativeName>
        <fullName>Complex III subunit III</fullName>
    </alternativeName>
    <alternativeName>
        <fullName>Cytochrome b-c1 complex subunit 3</fullName>
    </alternativeName>
    <alternativeName>
        <fullName>Ubiquinol-cytochrome-c reductase complex cytochrome b subunit</fullName>
    </alternativeName>
</protein>
<geneLocation type="mitochondrion"/>
<comment type="function">
    <text evidence="2">Component of the ubiquinol-cytochrome c reductase complex (complex III or cytochrome b-c1 complex) that is part of the mitochondrial respiratory chain. The b-c1 complex mediates electron transfer from ubiquinol to cytochrome c. Contributes to the generation of a proton gradient across the mitochondrial membrane that is then used for ATP synthesis.</text>
</comment>
<comment type="cofactor">
    <cofactor evidence="2">
        <name>heme b</name>
        <dbReference type="ChEBI" id="CHEBI:60344"/>
    </cofactor>
    <text evidence="2">Binds 2 heme b groups non-covalently.</text>
</comment>
<comment type="subunit">
    <text evidence="2">The cytochrome bc1 complex contains 11 subunits: 3 respiratory subunits (MT-CYB, CYC1 and UQCRFS1), 2 core proteins (UQCRC1 and UQCRC2) and 6 low-molecular weight proteins (UQCRH/QCR6, UQCRB/QCR7, UQCRQ/QCR8, UQCR10/QCR9, UQCR11/QCR10 and a cleavage product of UQCRFS1). This cytochrome bc1 complex then forms a dimer.</text>
</comment>
<comment type="subcellular location">
    <subcellularLocation>
        <location evidence="2">Mitochondrion inner membrane</location>
        <topology evidence="2">Multi-pass membrane protein</topology>
    </subcellularLocation>
</comment>
<comment type="miscellaneous">
    <text evidence="1">Heme 1 (or BL or b562) is low-potential and absorbs at about 562 nm, and heme 2 (or BH or b566) is high-potential and absorbs at about 566 nm.</text>
</comment>
<comment type="similarity">
    <text evidence="3 4">Belongs to the cytochrome b family.</text>
</comment>
<comment type="caution">
    <text evidence="2">The full-length protein contains only eight transmembrane helices, not nine as predicted by bioinformatics tools.</text>
</comment>
<sequence length="379" mass="42601">MTNLRKTHPLMKIINSSFIDLPAPSNISSWWNFGSLLGVCLIIQILTGLFLAMHYTSDTMTAFSSVTHICRDVNYGWLIRYLHANGASMFFICLFLHVGRGLYYGSYMYLETWNIGVLLLFAVMATAFMGYVLPWGQMSFWGATVITNLLSAIPYIGSDLVEWIWGGFSVDKATLTRFFAFHFILPFIIAALAGVHLLFLHETGSNNPSGLSSDADKIPFHPYYTIKDILGVLLLILVLTSLVLFSPDLLGDPDNYTPANPLNTPPHIKPEWYFLFAYAILRSIPNKLGGVLALVLSILILAVIPLLHTSKQRSMMFRPFSQCLFWILVADLLTLTWIGGQPVEHPYIIIGQLASILYFLLILVIMPITSLLENNLLKW</sequence>